<keyword id="KW-1185">Reference proteome</keyword>
<keyword id="KW-0853">WD repeat</keyword>
<protein>
    <recommendedName>
        <fullName>Uncharacterized WD repeat-containing protein DR_1725</fullName>
    </recommendedName>
    <alternativeName>
        <fullName>Orf509d</fullName>
    </alternativeName>
</protein>
<dbReference type="EMBL" id="AB016803">
    <property type="protein sequence ID" value="BAA32391.1"/>
    <property type="molecule type" value="Genomic_DNA"/>
</dbReference>
<dbReference type="EMBL" id="AE000513">
    <property type="protein sequence ID" value="AAF11282.1"/>
    <property type="molecule type" value="Genomic_DNA"/>
</dbReference>
<dbReference type="PIR" id="B75361">
    <property type="entry name" value="B75361"/>
</dbReference>
<dbReference type="RefSeq" id="NP_295448.1">
    <property type="nucleotide sequence ID" value="NC_001263.1"/>
</dbReference>
<dbReference type="RefSeq" id="WP_010888360.1">
    <property type="nucleotide sequence ID" value="NC_001263.1"/>
</dbReference>
<dbReference type="SMR" id="O83030"/>
<dbReference type="STRING" id="243230.DR_1725"/>
<dbReference type="PaxDb" id="243230-DR_1725"/>
<dbReference type="EnsemblBacteria" id="AAF11282">
    <property type="protein sequence ID" value="AAF11282"/>
    <property type="gene ID" value="DR_1725"/>
</dbReference>
<dbReference type="GeneID" id="69517963"/>
<dbReference type="KEGG" id="dra:DR_1725"/>
<dbReference type="PATRIC" id="fig|243230.17.peg.1935"/>
<dbReference type="eggNOG" id="COG2319">
    <property type="taxonomic scope" value="Bacteria"/>
</dbReference>
<dbReference type="HOGENOM" id="CLU_1041008_0_0_0"/>
<dbReference type="InParanoid" id="O83030"/>
<dbReference type="OrthoDB" id="61842at2"/>
<dbReference type="Proteomes" id="UP000002524">
    <property type="component" value="Chromosome 1"/>
</dbReference>
<dbReference type="Gene3D" id="2.130.10.10">
    <property type="entry name" value="YVTN repeat-like/Quinoprotein amine dehydrogenase"/>
    <property type="match status" value="2"/>
</dbReference>
<dbReference type="InterPro" id="IPR011044">
    <property type="entry name" value="Quino_amine_DH_bsu"/>
</dbReference>
<dbReference type="InterPro" id="IPR015943">
    <property type="entry name" value="WD40/YVTN_repeat-like_dom_sf"/>
</dbReference>
<dbReference type="InterPro" id="IPR001680">
    <property type="entry name" value="WD40_rpt"/>
</dbReference>
<dbReference type="SUPFAM" id="SSF50969">
    <property type="entry name" value="YVTN repeat-like/Quinoprotein amine dehydrogenase"/>
    <property type="match status" value="1"/>
</dbReference>
<dbReference type="PROSITE" id="PS50082">
    <property type="entry name" value="WD_REPEATS_2"/>
    <property type="match status" value="1"/>
</dbReference>
<dbReference type="PROSITE" id="PS50294">
    <property type="entry name" value="WD_REPEATS_REGION"/>
    <property type="match status" value="1"/>
</dbReference>
<gene>
    <name type="ordered locus">DR_1725</name>
</gene>
<accession>O83030</accession>
<organism>
    <name type="scientific">Deinococcus radiodurans (strain ATCC 13939 / DSM 20539 / JCM 16871 / CCUG 27074 / LMG 4051 / NBRC 15346 / NCIMB 9279 / VKM B-1422 / R1)</name>
    <dbReference type="NCBI Taxonomy" id="243230"/>
    <lineage>
        <taxon>Bacteria</taxon>
        <taxon>Thermotogati</taxon>
        <taxon>Deinococcota</taxon>
        <taxon>Deinococci</taxon>
        <taxon>Deinococcales</taxon>
        <taxon>Deinococcaceae</taxon>
        <taxon>Deinococcus</taxon>
    </lineage>
</organism>
<name>Y1725_DEIRA</name>
<feature type="chain" id="PRO_0000051521" description="Uncharacterized WD repeat-containing protein DR_1725">
    <location>
        <begin position="1"/>
        <end position="263"/>
    </location>
</feature>
<feature type="repeat" description="WD">
    <location>
        <begin position="53"/>
        <end position="89"/>
    </location>
</feature>
<sequence>MPRLIPLLALLLCASASAELRADITKGTPHGYGAMKVYDGQTLLFQATTRGLSAVTASKFSPDGRWLVNLTDQGYVQLWDVHKGERVKTFLAPFARVLNADFTPDSTRLLLNFWGDSTPTNFWQGTRSSFWSLEPLQRLGTLDGKGWDIGYSGNVHFDAAGKRMVTASFRFFGGQAAAVYDAATGAPIATLSRVPYPPGALQTGGAGAADARLAPDGRRALVYDVAGRLAEYDAATSQLLKVRGKVDSAGAGAQLERFAREGK</sequence>
<reference key="1">
    <citation type="submission" date="1998-08" db="EMBL/GenBank/DDBJ databases">
        <title>IS8301: the second insertion sequence element from Deinococcus radiodurans.</title>
        <authorList>
            <person name="Narumi I."/>
            <person name="Islam S."/>
            <person name="Cherdchu K."/>
            <person name="Kikuchi M."/>
            <person name="Watanabe H."/>
            <person name="Kitayama S."/>
            <person name="Yamamoto K."/>
        </authorList>
    </citation>
    <scope>NUCLEOTIDE SEQUENCE [GENOMIC DNA]</scope>
</reference>
<reference key="2">
    <citation type="journal article" date="1999" name="Science">
        <title>Genome sequence of the radioresistant bacterium Deinococcus radiodurans R1.</title>
        <authorList>
            <person name="White O."/>
            <person name="Eisen J.A."/>
            <person name="Heidelberg J.F."/>
            <person name="Hickey E.K."/>
            <person name="Peterson J.D."/>
            <person name="Dodson R.J."/>
            <person name="Haft D.H."/>
            <person name="Gwinn M.L."/>
            <person name="Nelson W.C."/>
            <person name="Richardson D.L."/>
            <person name="Moffat K.S."/>
            <person name="Qin H."/>
            <person name="Jiang L."/>
            <person name="Pamphile W."/>
            <person name="Crosby M."/>
            <person name="Shen M."/>
            <person name="Vamathevan J.J."/>
            <person name="Lam P."/>
            <person name="McDonald L.A."/>
            <person name="Utterback T.R."/>
            <person name="Zalewski C."/>
            <person name="Makarova K.S."/>
            <person name="Aravind L."/>
            <person name="Daly M.J."/>
            <person name="Minton K.W."/>
            <person name="Fleischmann R.D."/>
            <person name="Ketchum K.A."/>
            <person name="Nelson K.E."/>
            <person name="Salzberg S.L."/>
            <person name="Smith H.O."/>
            <person name="Venter J.C."/>
            <person name="Fraser C.M."/>
        </authorList>
    </citation>
    <scope>NUCLEOTIDE SEQUENCE [LARGE SCALE GENOMIC DNA]</scope>
    <source>
        <strain>ATCC 13939 / DSM 20539 / JCM 16871 / CCUG 27074 / LMG 4051 / NBRC 15346 / NCIMB 9279 / VKM B-1422 / R1</strain>
    </source>
</reference>
<proteinExistence type="predicted"/>